<keyword id="KW-0413">Isomerase</keyword>
<protein>
    <recommendedName>
        <fullName>Putative isochorismate synthase</fullName>
        <ecNumber>5.4.4.2</ecNumber>
    </recommendedName>
    <alternativeName>
        <fullName>Amonabactin</fullName>
    </alternativeName>
    <alternativeName>
        <fullName>Isochorismate mutase</fullName>
    </alternativeName>
</protein>
<name>AMOA_AERHY</name>
<organism>
    <name type="scientific">Aeromonas hydrophila</name>
    <dbReference type="NCBI Taxonomy" id="644"/>
    <lineage>
        <taxon>Bacteria</taxon>
        <taxon>Pseudomonadati</taxon>
        <taxon>Pseudomonadota</taxon>
        <taxon>Gammaproteobacteria</taxon>
        <taxon>Aeromonadales</taxon>
        <taxon>Aeromonadaceae</taxon>
        <taxon>Aeromonas</taxon>
    </lineage>
</organism>
<proteinExistence type="inferred from homology"/>
<evidence type="ECO:0000305" key="1"/>
<dbReference type="EC" id="5.4.4.2"/>
<dbReference type="EMBL" id="M63339">
    <property type="protein sequence ID" value="AAA21935.1"/>
    <property type="molecule type" value="Genomic_DNA"/>
</dbReference>
<dbReference type="PIR" id="A40365">
    <property type="entry name" value="A40365"/>
</dbReference>
<dbReference type="SMR" id="P23300"/>
<dbReference type="UniPathway" id="UPA00015"/>
<dbReference type="GO" id="GO:0008909">
    <property type="term" value="F:isochorismate synthase activity"/>
    <property type="evidence" value="ECO:0007669"/>
    <property type="project" value="UniProtKB-EC"/>
</dbReference>
<dbReference type="GO" id="GO:0009058">
    <property type="term" value="P:biosynthetic process"/>
    <property type="evidence" value="ECO:0007669"/>
    <property type="project" value="InterPro"/>
</dbReference>
<dbReference type="Gene3D" id="3.60.120.10">
    <property type="entry name" value="Anthranilate synthase"/>
    <property type="match status" value="1"/>
</dbReference>
<dbReference type="InterPro" id="IPR005801">
    <property type="entry name" value="ADC_synthase"/>
</dbReference>
<dbReference type="InterPro" id="IPR015890">
    <property type="entry name" value="Chorismate_C"/>
</dbReference>
<dbReference type="InterPro" id="IPR004561">
    <property type="entry name" value="IsoChor_synthase"/>
</dbReference>
<dbReference type="NCBIfam" id="TIGR00543">
    <property type="entry name" value="isochor_syn"/>
    <property type="match status" value="1"/>
</dbReference>
<dbReference type="PANTHER" id="PTHR42839">
    <property type="entry name" value="ISOCHORISMATE SYNTHASE ENTC"/>
    <property type="match status" value="1"/>
</dbReference>
<dbReference type="PANTHER" id="PTHR42839:SF2">
    <property type="entry name" value="ISOCHORISMATE SYNTHASE ENTC"/>
    <property type="match status" value="1"/>
</dbReference>
<dbReference type="Pfam" id="PF00425">
    <property type="entry name" value="Chorismate_bind"/>
    <property type="match status" value="1"/>
</dbReference>
<dbReference type="SUPFAM" id="SSF56322">
    <property type="entry name" value="ADC synthase"/>
    <property type="match status" value="1"/>
</dbReference>
<feature type="chain" id="PRO_0000154143" description="Putative isochorismate synthase">
    <location>
        <begin position="1"/>
        <end position="396"/>
    </location>
</feature>
<reference key="1">
    <citation type="journal article" date="1991" name="J. Bacteriol.">
        <title>Cloning, mutagenesis, and nucleotide sequence of a siderophore biosynthetic gene (amoA) from Aeromonas hydrophila.</title>
        <authorList>
            <person name="Barghouthi S."/>
            <person name="Payne S.M."/>
            <person name="Arceneaux J.E."/>
            <person name="Byers B.R."/>
        </authorList>
    </citation>
    <scope>NUCLEOTIDE SEQUENCE [GENOMIC DNA]</scope>
    <source>
        <strain>495A2</strain>
    </source>
</reference>
<sequence length="396" mass="42074">MDTLVMENSAPAQAASSPEFLFTSGQGTLSATDWASLITTPACEWPLLEQQIASALAAARPAGQANPLLIGCLRVRPGGSSCLYVPAAMSGDRPVPAAQAPVTAAMANQVVEANRVISVQSTPPASEFQASVSAALDAFAQGRLAKVVLSRKLTLTLHQPADPTQVMARLMAQNPHAFHFSLPLGQGRRLLGASPELLLRVSEGEVFTHPLARSARRASEPAQEQMVARDLLASRKDQHEHKLVIDEIRRVLTPHCRELAIPSSPSLMSTDTLWHLGTPIAGRLNGGEASVLSLACQLHPTPALCGYPTELARQFIREQEPFRRALFSGIVGWCDSQGNGEWAVVIRCGVLDGHQVELFAGAGIVAGSDPPWSGPRPGTKLGTMLKALGLDLEVAQ</sequence>
<gene>
    <name type="primary">amoA</name>
</gene>
<comment type="function">
    <text>Involved in the synthesis of amonabactin, a phenolate siderophore containing 2,3-dihydroxybenzoic acid (2,3-DHB).</text>
</comment>
<comment type="catalytic activity">
    <reaction>
        <text>chorismate = isochorismate</text>
        <dbReference type="Rhea" id="RHEA:18985"/>
        <dbReference type="ChEBI" id="CHEBI:29748"/>
        <dbReference type="ChEBI" id="CHEBI:29780"/>
        <dbReference type="EC" id="5.4.4.2"/>
    </reaction>
</comment>
<comment type="pathway">
    <text>Siderophore biosynthesis; amonabactin biosynthesis.</text>
</comment>
<comment type="similarity">
    <text evidence="1">Belongs to the isochorismate synthase family.</text>
</comment>
<accession>P23300</accession>